<name>Y4601_BURTA</name>
<proteinExistence type="inferred from homology"/>
<reference key="1">
    <citation type="journal article" date="2005" name="BMC Genomics">
        <title>Bacterial genome adaptation to niches: divergence of the potential virulence genes in three Burkholderia species of different survival strategies.</title>
        <authorList>
            <person name="Kim H.S."/>
            <person name="Schell M.A."/>
            <person name="Yu Y."/>
            <person name="Ulrich R.L."/>
            <person name="Sarria S.H."/>
            <person name="Nierman W.C."/>
            <person name="DeShazer D."/>
        </authorList>
    </citation>
    <scope>NUCLEOTIDE SEQUENCE [LARGE SCALE GENOMIC DNA]</scope>
    <source>
        <strain>ATCC 700388 / DSM 13276 / CCUG 48851 / CIP 106301 / E264</strain>
    </source>
</reference>
<protein>
    <recommendedName>
        <fullName evidence="1">PKHD-type hydroxylase BTH_II1201</fullName>
        <ecNumber evidence="1">1.14.11.-</ecNumber>
    </recommendedName>
</protein>
<sequence>MMLHIPGVLTKEQVAQCRDILDAADWADGNATSGAQSALAKRNRQLPEGSPAARAIGDAIQDALARNALFFSAALPLKVFPPLFNRYAGGDAFGTHVDNAIRLLRGTDFRVRSDLSATLFLEEPDAYDGGELCVEDTYGVHRAKLPAGDMVLYPASSLHHVTPVTRGERVASFFWIQSMVRDDADRTLLFQLDTQIQQLTAEKGGRDASVIALTGIYHNLLRRWADA</sequence>
<gene>
    <name type="ordered locus">BTH_II1201</name>
</gene>
<comment type="cofactor">
    <cofactor evidence="1">
        <name>Fe(2+)</name>
        <dbReference type="ChEBI" id="CHEBI:29033"/>
    </cofactor>
    <text evidence="1">Binds 1 Fe(2+) ion per subunit.</text>
</comment>
<comment type="cofactor">
    <cofactor evidence="1">
        <name>L-ascorbate</name>
        <dbReference type="ChEBI" id="CHEBI:38290"/>
    </cofactor>
</comment>
<feature type="chain" id="PRO_1000061716" description="PKHD-type hydroxylase BTH_II1201">
    <location>
        <begin position="1"/>
        <end position="227"/>
    </location>
</feature>
<feature type="domain" description="Fe2OG dioxygenase" evidence="1">
    <location>
        <begin position="78"/>
        <end position="178"/>
    </location>
</feature>
<feature type="binding site" evidence="1">
    <location>
        <position position="96"/>
    </location>
    <ligand>
        <name>Fe cation</name>
        <dbReference type="ChEBI" id="CHEBI:24875"/>
    </ligand>
</feature>
<feature type="binding site" evidence="1">
    <location>
        <position position="98"/>
    </location>
    <ligand>
        <name>Fe cation</name>
        <dbReference type="ChEBI" id="CHEBI:24875"/>
    </ligand>
</feature>
<feature type="binding site" evidence="1">
    <location>
        <position position="159"/>
    </location>
    <ligand>
        <name>Fe cation</name>
        <dbReference type="ChEBI" id="CHEBI:24875"/>
    </ligand>
</feature>
<feature type="binding site" evidence="1">
    <location>
        <position position="169"/>
    </location>
    <ligand>
        <name>2-oxoglutarate</name>
        <dbReference type="ChEBI" id="CHEBI:16810"/>
    </ligand>
</feature>
<dbReference type="EC" id="1.14.11.-" evidence="1"/>
<dbReference type="EMBL" id="CP000085">
    <property type="protein sequence ID" value="ABC35648.1"/>
    <property type="molecule type" value="Genomic_DNA"/>
</dbReference>
<dbReference type="RefSeq" id="WP_009896757.1">
    <property type="nucleotide sequence ID" value="NZ_CP008786.1"/>
</dbReference>
<dbReference type="SMR" id="Q2T602"/>
<dbReference type="DNASU" id="3844863"/>
<dbReference type="GeneID" id="45118652"/>
<dbReference type="KEGG" id="bte:BTH_II1201"/>
<dbReference type="HOGENOM" id="CLU_106663_0_0_4"/>
<dbReference type="Proteomes" id="UP000001930">
    <property type="component" value="Chromosome II"/>
</dbReference>
<dbReference type="GO" id="GO:0016706">
    <property type="term" value="F:2-oxoglutarate-dependent dioxygenase activity"/>
    <property type="evidence" value="ECO:0007669"/>
    <property type="project" value="UniProtKB-UniRule"/>
</dbReference>
<dbReference type="GO" id="GO:0005506">
    <property type="term" value="F:iron ion binding"/>
    <property type="evidence" value="ECO:0007669"/>
    <property type="project" value="UniProtKB-UniRule"/>
</dbReference>
<dbReference type="GO" id="GO:0031418">
    <property type="term" value="F:L-ascorbic acid binding"/>
    <property type="evidence" value="ECO:0007669"/>
    <property type="project" value="UniProtKB-KW"/>
</dbReference>
<dbReference type="GO" id="GO:0006974">
    <property type="term" value="P:DNA damage response"/>
    <property type="evidence" value="ECO:0007669"/>
    <property type="project" value="TreeGrafter"/>
</dbReference>
<dbReference type="GO" id="GO:0006879">
    <property type="term" value="P:intracellular iron ion homeostasis"/>
    <property type="evidence" value="ECO:0007669"/>
    <property type="project" value="TreeGrafter"/>
</dbReference>
<dbReference type="Gene3D" id="2.60.120.620">
    <property type="entry name" value="q2cbj1_9rhob like domain"/>
    <property type="match status" value="1"/>
</dbReference>
<dbReference type="Gene3D" id="4.10.860.20">
    <property type="entry name" value="Rabenosyn, Rab binding domain"/>
    <property type="match status" value="1"/>
</dbReference>
<dbReference type="HAMAP" id="MF_00657">
    <property type="entry name" value="Hydroxyl_YbiX"/>
    <property type="match status" value="1"/>
</dbReference>
<dbReference type="InterPro" id="IPR005123">
    <property type="entry name" value="Oxoglu/Fe-dep_dioxygenase_dom"/>
</dbReference>
<dbReference type="InterPro" id="IPR041097">
    <property type="entry name" value="PKHD_C"/>
</dbReference>
<dbReference type="InterPro" id="IPR023550">
    <property type="entry name" value="PKHD_hydroxylase"/>
</dbReference>
<dbReference type="InterPro" id="IPR006620">
    <property type="entry name" value="Pro_4_hyd_alph"/>
</dbReference>
<dbReference type="InterPro" id="IPR044862">
    <property type="entry name" value="Pro_4_hyd_alph_FE2OG_OXY"/>
</dbReference>
<dbReference type="NCBIfam" id="NF003973">
    <property type="entry name" value="PRK05467.1-2"/>
    <property type="match status" value="1"/>
</dbReference>
<dbReference type="NCBIfam" id="NF003974">
    <property type="entry name" value="PRK05467.1-3"/>
    <property type="match status" value="1"/>
</dbReference>
<dbReference type="NCBIfam" id="NF003975">
    <property type="entry name" value="PRK05467.1-4"/>
    <property type="match status" value="1"/>
</dbReference>
<dbReference type="PANTHER" id="PTHR41536">
    <property type="entry name" value="PKHD-TYPE HYDROXYLASE YBIX"/>
    <property type="match status" value="1"/>
</dbReference>
<dbReference type="PANTHER" id="PTHR41536:SF1">
    <property type="entry name" value="PKHD-TYPE HYDROXYLASE YBIX"/>
    <property type="match status" value="1"/>
</dbReference>
<dbReference type="Pfam" id="PF13640">
    <property type="entry name" value="2OG-FeII_Oxy_3"/>
    <property type="match status" value="1"/>
</dbReference>
<dbReference type="Pfam" id="PF18331">
    <property type="entry name" value="PKHD_C"/>
    <property type="match status" value="1"/>
</dbReference>
<dbReference type="SMART" id="SM00702">
    <property type="entry name" value="P4Hc"/>
    <property type="match status" value="1"/>
</dbReference>
<dbReference type="SUPFAM" id="SSF51197">
    <property type="entry name" value="Clavaminate synthase-like"/>
    <property type="match status" value="1"/>
</dbReference>
<dbReference type="PROSITE" id="PS51471">
    <property type="entry name" value="FE2OG_OXY"/>
    <property type="match status" value="1"/>
</dbReference>
<keyword id="KW-0223">Dioxygenase</keyword>
<keyword id="KW-0408">Iron</keyword>
<keyword id="KW-0479">Metal-binding</keyword>
<keyword id="KW-0560">Oxidoreductase</keyword>
<keyword id="KW-0847">Vitamin C</keyword>
<accession>Q2T602</accession>
<evidence type="ECO:0000255" key="1">
    <source>
        <dbReference type="HAMAP-Rule" id="MF_00657"/>
    </source>
</evidence>
<organism>
    <name type="scientific">Burkholderia thailandensis (strain ATCC 700388 / DSM 13276 / CCUG 48851 / CIP 106301 / E264)</name>
    <dbReference type="NCBI Taxonomy" id="271848"/>
    <lineage>
        <taxon>Bacteria</taxon>
        <taxon>Pseudomonadati</taxon>
        <taxon>Pseudomonadota</taxon>
        <taxon>Betaproteobacteria</taxon>
        <taxon>Burkholderiales</taxon>
        <taxon>Burkholderiaceae</taxon>
        <taxon>Burkholderia</taxon>
        <taxon>pseudomallei group</taxon>
    </lineage>
</organism>